<sequence>MGTRRRSARARARPPLAMPLAVLLLFACSSGVAAAAAQGIERIKDDPVGKLKVYVYELPPKYNKNIVAKDSRCLSHMFATEIFMHRFLLSSAIRTSNPDEADWFYTPVYTTCDLTPWGHPLTTKSPRMMRSAIKFISKYWPYWNRTEGADHFFVVPHDFAACFYFQEAKAIERGILPVLRRATLVQTFGQKNHACLKDGSITVPPYTPAHKIRAHLVPPETPRSIFVYFRGLFYDTSNDPEGGYYARGARASVWENFKNNPMFDISTDHPQTYYEDMQRAVFCLCPLGWAPWSPRLVEAVVFGCIPVIIADDIVLPFSDAIPWEEIAVFVAEDDVPQLDTILTSIPTEVILRKQAMLAEPSMKQTMLFPQPAEPGDGFHQVMNALARKLPHGRDVFLKPGQKVLNWTEGTREDLKPW</sequence>
<comment type="function">
    <text evidence="1">Involved in the synthesis of glucuronoxylan hemicellulose in secondary cell walls.</text>
</comment>
<comment type="subcellular location">
    <subcellularLocation>
        <location evidence="1">Golgi apparatus membrane</location>
        <topology evidence="1">Single-pass type II membrane protein</topology>
    </subcellularLocation>
</comment>
<comment type="alternative products">
    <event type="alternative splicing"/>
    <isoform>
        <id>Q33AH8-1</id>
        <name>1</name>
        <sequence type="displayed"/>
    </isoform>
    <isoform>
        <id>Q33AH8-2</id>
        <name>2</name>
        <sequence type="described" ref="VSP_040958"/>
    </isoform>
</comment>
<comment type="miscellaneous">
    <molecule>Isoform 2</molecule>
    <text evidence="3">May be due to a competing acceptor splice site.</text>
</comment>
<comment type="similarity">
    <text evidence="3">Belongs to the glycosyltransferase 47 family.</text>
</comment>
<comment type="sequence caution" evidence="3">
    <conflict type="erroneous initiation">
        <sequence resource="EMBL-CDS" id="AAL76189"/>
    </conflict>
    <text>Truncated N-terminus.</text>
</comment>
<comment type="sequence caution" evidence="3">
    <conflict type="erroneous initiation">
        <sequence resource="EMBL-CDS" id="AAM74308"/>
    </conflict>
    <text>Truncated N-terminus.</text>
</comment>
<comment type="sequence caution" evidence="3">
    <conflict type="erroneous gene model prediction">
        <sequence resource="EMBL-CDS" id="ABB46945"/>
    </conflict>
</comment>
<comment type="sequence caution" evidence="3">
    <conflict type="erroneous initiation">
        <sequence resource="EMBL-CDS" id="ABB46946"/>
    </conflict>
    <text>Truncated N-terminus.</text>
</comment>
<keyword id="KW-0025">Alternative splicing</keyword>
<keyword id="KW-0961">Cell wall biogenesis/degradation</keyword>
<keyword id="KW-0325">Glycoprotein</keyword>
<keyword id="KW-0328">Glycosyltransferase</keyword>
<keyword id="KW-0333">Golgi apparatus</keyword>
<keyword id="KW-0472">Membrane</keyword>
<keyword id="KW-1185">Reference proteome</keyword>
<keyword id="KW-0735">Signal-anchor</keyword>
<keyword id="KW-0808">Transferase</keyword>
<keyword id="KW-0812">Transmembrane</keyword>
<keyword id="KW-1133">Transmembrane helix</keyword>
<accession>Q33AH8</accession>
<accession>Q33AI0</accession>
<accession>Q8GSQ3</accession>
<accession>Q8LNA1</accession>
<accession>Q8SB14</accession>
<dbReference type="EC" id="2.4.-.-"/>
<dbReference type="EMBL" id="AC083944">
    <property type="protein sequence ID" value="AAM74308.1"/>
    <property type="status" value="ALT_INIT"/>
    <property type="molecule type" value="Genomic_DNA"/>
</dbReference>
<dbReference type="EMBL" id="AC092173">
    <property type="protein sequence ID" value="AAL76189.1"/>
    <property type="status" value="ALT_INIT"/>
    <property type="molecule type" value="Genomic_DNA"/>
</dbReference>
<dbReference type="EMBL" id="DP000086">
    <property type="protein sequence ID" value="ABB46945.2"/>
    <property type="status" value="ALT_SEQ"/>
    <property type="molecule type" value="Genomic_DNA"/>
</dbReference>
<dbReference type="EMBL" id="DP000086">
    <property type="protein sequence ID" value="ABB46946.2"/>
    <property type="status" value="ALT_INIT"/>
    <property type="molecule type" value="Genomic_DNA"/>
</dbReference>
<dbReference type="EMBL" id="DP000086">
    <property type="protein sequence ID" value="ABB46947.2"/>
    <property type="molecule type" value="Genomic_DNA"/>
</dbReference>
<dbReference type="EMBL" id="AP008216">
    <property type="protein sequence ID" value="BAF26162.1"/>
    <property type="molecule type" value="Genomic_DNA"/>
</dbReference>
<dbReference type="EMBL" id="AP014966">
    <property type="status" value="NOT_ANNOTATED_CDS"/>
    <property type="molecule type" value="Genomic_DNA"/>
</dbReference>
<dbReference type="EMBL" id="AB080694">
    <property type="protein sequence ID" value="BAC20930.1"/>
    <property type="molecule type" value="mRNA"/>
</dbReference>
<dbReference type="EMBL" id="AK109393">
    <property type="protein sequence ID" value="BAG98714.1"/>
    <property type="molecule type" value="mRNA"/>
</dbReference>
<dbReference type="RefSeq" id="XP_015614619.1">
    <property type="nucleotide sequence ID" value="XM_015759133.1"/>
</dbReference>
<dbReference type="RefSeq" id="XP_015614620.1">
    <property type="nucleotide sequence ID" value="XM_015759134.1"/>
</dbReference>
<dbReference type="FunCoup" id="Q33AH8">
    <property type="interactions" value="1"/>
</dbReference>
<dbReference type="STRING" id="39947.Q33AH8"/>
<dbReference type="CAZy" id="GT47">
    <property type="family name" value="Glycosyltransferase Family 47"/>
</dbReference>
<dbReference type="GlyCosmos" id="Q33AH8">
    <property type="glycosylation" value="2 sites, No reported glycans"/>
</dbReference>
<dbReference type="PaxDb" id="39947-Q33AH8"/>
<dbReference type="EnsemblPlants" id="Os10t0180000-01">
    <molecule id="Q33AH8-1"/>
    <property type="protein sequence ID" value="Os10t0180000-01"/>
    <property type="gene ID" value="Os10g0180000"/>
</dbReference>
<dbReference type="Gramene" id="Os10t0180000-01">
    <molecule id="Q33AH8-1"/>
    <property type="protein sequence ID" value="Os10t0180000-01"/>
    <property type="gene ID" value="Os10g0180000"/>
</dbReference>
<dbReference type="KEGG" id="dosa:Os10g0180000"/>
<dbReference type="eggNOG" id="KOG1021">
    <property type="taxonomic scope" value="Eukaryota"/>
</dbReference>
<dbReference type="HOGENOM" id="CLU_039682_1_0_1"/>
<dbReference type="InParanoid" id="Q33AH8"/>
<dbReference type="OMA" id="HFFVEAK"/>
<dbReference type="OrthoDB" id="1924787at2759"/>
<dbReference type="Proteomes" id="UP000000763">
    <property type="component" value="Chromosome 10"/>
</dbReference>
<dbReference type="Proteomes" id="UP000059680">
    <property type="component" value="Chromosome 10"/>
</dbReference>
<dbReference type="ExpressionAtlas" id="Q33AH8">
    <property type="expression patterns" value="baseline and differential"/>
</dbReference>
<dbReference type="GO" id="GO:0000139">
    <property type="term" value="C:Golgi membrane"/>
    <property type="evidence" value="ECO:0007669"/>
    <property type="project" value="UniProtKB-SubCell"/>
</dbReference>
<dbReference type="GO" id="GO:0016757">
    <property type="term" value="F:glycosyltransferase activity"/>
    <property type="evidence" value="ECO:0007669"/>
    <property type="project" value="UniProtKB-KW"/>
</dbReference>
<dbReference type="GO" id="GO:0071555">
    <property type="term" value="P:cell wall organization"/>
    <property type="evidence" value="ECO:0007669"/>
    <property type="project" value="UniProtKB-KW"/>
</dbReference>
<dbReference type="GO" id="GO:0010417">
    <property type="term" value="P:glucuronoxylan biosynthetic process"/>
    <property type="evidence" value="ECO:0000318"/>
    <property type="project" value="GO_Central"/>
</dbReference>
<dbReference type="GO" id="GO:0009834">
    <property type="term" value="P:plant-type secondary cell wall biogenesis"/>
    <property type="evidence" value="ECO:0000318"/>
    <property type="project" value="GO_Central"/>
</dbReference>
<dbReference type="GO" id="GO:0006486">
    <property type="term" value="P:protein glycosylation"/>
    <property type="evidence" value="ECO:0007669"/>
    <property type="project" value="InterPro"/>
</dbReference>
<dbReference type="InterPro" id="IPR004263">
    <property type="entry name" value="Exostosin"/>
</dbReference>
<dbReference type="InterPro" id="IPR040911">
    <property type="entry name" value="Exostosin_GT47"/>
</dbReference>
<dbReference type="PANTHER" id="PTHR11062">
    <property type="entry name" value="EXOSTOSIN HEPARAN SULFATE GLYCOSYLTRANSFERASE -RELATED"/>
    <property type="match status" value="1"/>
</dbReference>
<dbReference type="PANTHER" id="PTHR11062:SF399">
    <property type="entry name" value="GLUCURONOSYLTRANSFERASE OS01G0926600-RELATED"/>
    <property type="match status" value="1"/>
</dbReference>
<dbReference type="Pfam" id="PF03016">
    <property type="entry name" value="Exostosin_GT47"/>
    <property type="match status" value="1"/>
</dbReference>
<protein>
    <recommendedName>
        <fullName>Probable glucuronosyltransferase GUT1</fullName>
        <ecNumber>2.4.-.-</ecNumber>
    </recommendedName>
    <alternativeName>
        <fullName>Glucuronoxylan glucuronosyltransferase 1</fullName>
        <shortName>OsGUT1</shortName>
    </alternativeName>
</protein>
<name>GT101_ORYSJ</name>
<evidence type="ECO:0000250" key="1"/>
<evidence type="ECO:0000255" key="2"/>
<evidence type="ECO:0000305" key="3"/>
<feature type="chain" id="PRO_0000407573" description="Probable glucuronosyltransferase GUT1">
    <location>
        <begin position="1"/>
        <end position="417"/>
    </location>
</feature>
<feature type="topological domain" description="Cytoplasmic" evidence="2">
    <location>
        <begin position="1"/>
        <end position="15"/>
    </location>
</feature>
<feature type="transmembrane region" description="Helical; Signal-anchor for type II membrane protein" evidence="2">
    <location>
        <begin position="16"/>
        <end position="36"/>
    </location>
</feature>
<feature type="topological domain" description="Lumenal" evidence="2">
    <location>
        <begin position="37"/>
        <end position="417"/>
    </location>
</feature>
<feature type="glycosylation site" description="N-linked (GlcNAc...) asparagine" evidence="2">
    <location>
        <position position="144"/>
    </location>
</feature>
<feature type="glycosylation site" description="N-linked (GlcNAc...) asparagine" evidence="2">
    <location>
        <position position="405"/>
    </location>
</feature>
<feature type="splice variant" id="VSP_040958" description="In isoform 2." evidence="3">
    <original>K</original>
    <variation>KE</variation>
    <location>
        <position position="44"/>
    </location>
</feature>
<feature type="sequence conflict" description="In Ref. 1; AAL76189 and 5; BAC20930." evidence="3" ref="1 5">
    <original>VLPF</original>
    <variation>DLPL</variation>
    <location>
        <begin position="314"/>
        <end position="317"/>
    </location>
</feature>
<gene>
    <name type="primary">GUT1</name>
    <name type="ordered locus">Os10g0180000</name>
    <name type="ordered locus">LOC_Os10g10080</name>
    <name type="ORF">OSJNBa0047G15.26</name>
    <name type="ORF">OSJNBa0095J15.1</name>
</gene>
<reference key="1">
    <citation type="journal article" date="2003" name="Science">
        <title>In-depth view of structure, activity, and evolution of rice chromosome 10.</title>
        <authorList>
            <person name="Yu Y."/>
            <person name="Rambo T."/>
            <person name="Currie J."/>
            <person name="Saski C."/>
            <person name="Kim H.-R."/>
            <person name="Collura K."/>
            <person name="Thompson S."/>
            <person name="Simmons J."/>
            <person name="Yang T.-J."/>
            <person name="Nah G."/>
            <person name="Patel A.J."/>
            <person name="Thurmond S."/>
            <person name="Henry D."/>
            <person name="Oates R."/>
            <person name="Palmer M."/>
            <person name="Pries G."/>
            <person name="Gibson J."/>
            <person name="Anderson H."/>
            <person name="Paradkar M."/>
            <person name="Crane L."/>
            <person name="Dale J."/>
            <person name="Carver M.B."/>
            <person name="Wood T."/>
            <person name="Frisch D."/>
            <person name="Engler F."/>
            <person name="Soderlund C."/>
            <person name="Palmer L.E."/>
            <person name="Teytelman L."/>
            <person name="Nascimento L."/>
            <person name="De la Bastide M."/>
            <person name="Spiegel L."/>
            <person name="Ware D."/>
            <person name="O'Shaughnessy A."/>
            <person name="Dike S."/>
            <person name="Dedhia N."/>
            <person name="Preston R."/>
            <person name="Huang E."/>
            <person name="Ferraro K."/>
            <person name="Kuit K."/>
            <person name="Miller B."/>
            <person name="Zutavern T."/>
            <person name="Katzenberger F."/>
            <person name="Muller S."/>
            <person name="Balija V."/>
            <person name="Martienssen R.A."/>
            <person name="Stein L."/>
            <person name="Minx P."/>
            <person name="Johnson D."/>
            <person name="Cordum H."/>
            <person name="Mardis E."/>
            <person name="Cheng Z."/>
            <person name="Jiang J."/>
            <person name="Wilson R."/>
            <person name="McCombie W.R."/>
            <person name="Wing R.A."/>
            <person name="Yuan Q."/>
            <person name="Ouyang S."/>
            <person name="Liu J."/>
            <person name="Jones K.M."/>
            <person name="Gansberger K."/>
            <person name="Moffat K."/>
            <person name="Hill J."/>
            <person name="Tsitrin T."/>
            <person name="Overton L."/>
            <person name="Bera J."/>
            <person name="Kim M."/>
            <person name="Jin S."/>
            <person name="Tallon L."/>
            <person name="Ciecko A."/>
            <person name="Pai G."/>
            <person name="Van Aken S."/>
            <person name="Utterback T."/>
            <person name="Reidmuller S."/>
            <person name="Bormann J."/>
            <person name="Feldblyum T."/>
            <person name="Hsiao J."/>
            <person name="Zismann V."/>
            <person name="Blunt S."/>
            <person name="de Vazeille A.R."/>
            <person name="Shaffer T."/>
            <person name="Koo H."/>
            <person name="Suh B."/>
            <person name="Yang Q."/>
            <person name="Haas B."/>
            <person name="Peterson J."/>
            <person name="Pertea M."/>
            <person name="Volfovsky N."/>
            <person name="Wortman J."/>
            <person name="White O."/>
            <person name="Salzberg S.L."/>
            <person name="Fraser C.M."/>
            <person name="Buell C.R."/>
            <person name="Messing J."/>
            <person name="Song R."/>
            <person name="Fuks G."/>
            <person name="Llaca V."/>
            <person name="Kovchak S."/>
            <person name="Young S."/>
            <person name="Bowers J.E."/>
            <person name="Paterson A.H."/>
            <person name="Johns M.A."/>
            <person name="Mao L."/>
            <person name="Pan H."/>
            <person name="Dean R.A."/>
        </authorList>
    </citation>
    <scope>NUCLEOTIDE SEQUENCE [LARGE SCALE GENOMIC DNA]</scope>
    <source>
        <strain>cv. Nipponbare</strain>
    </source>
</reference>
<reference key="2">
    <citation type="journal article" date="2005" name="Nature">
        <title>The map-based sequence of the rice genome.</title>
        <authorList>
            <consortium name="International rice genome sequencing project (IRGSP)"/>
        </authorList>
    </citation>
    <scope>NUCLEOTIDE SEQUENCE [LARGE SCALE GENOMIC DNA]</scope>
    <source>
        <strain>cv. Nipponbare</strain>
    </source>
</reference>
<reference key="3">
    <citation type="journal article" date="2008" name="Nucleic Acids Res.">
        <title>The rice annotation project database (RAP-DB): 2008 update.</title>
        <authorList>
            <consortium name="The rice annotation project (RAP)"/>
        </authorList>
    </citation>
    <scope>GENOME REANNOTATION</scope>
    <source>
        <strain>cv. Nipponbare</strain>
    </source>
</reference>
<reference key="4">
    <citation type="journal article" date="2013" name="Rice">
        <title>Improvement of the Oryza sativa Nipponbare reference genome using next generation sequence and optical map data.</title>
        <authorList>
            <person name="Kawahara Y."/>
            <person name="de la Bastide M."/>
            <person name="Hamilton J.P."/>
            <person name="Kanamori H."/>
            <person name="McCombie W.R."/>
            <person name="Ouyang S."/>
            <person name="Schwartz D.C."/>
            <person name="Tanaka T."/>
            <person name="Wu J."/>
            <person name="Zhou S."/>
            <person name="Childs K.L."/>
            <person name="Davidson R.M."/>
            <person name="Lin H."/>
            <person name="Quesada-Ocampo L."/>
            <person name="Vaillancourt B."/>
            <person name="Sakai H."/>
            <person name="Lee S.S."/>
            <person name="Kim J."/>
            <person name="Numa H."/>
            <person name="Itoh T."/>
            <person name="Buell C.R."/>
            <person name="Matsumoto T."/>
        </authorList>
    </citation>
    <scope>GENOME REANNOTATION</scope>
    <source>
        <strain>cv. Nipponbare</strain>
    </source>
</reference>
<reference key="5">
    <citation type="journal article" date="2002" name="Proc. Natl. Acad. Sci. U.S.A.">
        <title>A pectin glucuronyltransferase gene is essential for intercellular attachment in the plant meristem.</title>
        <authorList>
            <person name="Iwai H."/>
            <person name="Masaoka N."/>
            <person name="Ishii T."/>
            <person name="Satoh S."/>
        </authorList>
    </citation>
    <scope>NUCLEOTIDE SEQUENCE [MRNA] OF 18-417</scope>
    <source>
        <strain>cv. Nipponbare</strain>
    </source>
</reference>
<reference key="6">
    <citation type="journal article" date="2003" name="Science">
        <title>Collection, mapping, and annotation of over 28,000 cDNA clones from japonica rice.</title>
        <authorList>
            <consortium name="The rice full-length cDNA consortium"/>
        </authorList>
    </citation>
    <scope>NUCLEOTIDE SEQUENCE [LARGE SCALE MRNA] OF 77-417</scope>
    <source>
        <strain>cv. Nipponbare</strain>
    </source>
</reference>
<organism>
    <name type="scientific">Oryza sativa subsp. japonica</name>
    <name type="common">Rice</name>
    <dbReference type="NCBI Taxonomy" id="39947"/>
    <lineage>
        <taxon>Eukaryota</taxon>
        <taxon>Viridiplantae</taxon>
        <taxon>Streptophyta</taxon>
        <taxon>Embryophyta</taxon>
        <taxon>Tracheophyta</taxon>
        <taxon>Spermatophyta</taxon>
        <taxon>Magnoliopsida</taxon>
        <taxon>Liliopsida</taxon>
        <taxon>Poales</taxon>
        <taxon>Poaceae</taxon>
        <taxon>BOP clade</taxon>
        <taxon>Oryzoideae</taxon>
        <taxon>Oryzeae</taxon>
        <taxon>Oryzinae</taxon>
        <taxon>Oryza</taxon>
        <taxon>Oryza sativa</taxon>
    </lineage>
</organism>
<proteinExistence type="evidence at transcript level"/>